<proteinExistence type="inferred from homology"/>
<accession>C4YCC3</accession>
<sequence>MSELSAEEKRKLLRERRQAKMAQGKATDRLNNILSQGSSVKSSNVTSVLDKPEKATTTVMDLPSRETQSPTPLHDDPEVPDITSLLKEKENEAPDMEAMLQQILGGSGAHTGPGNDGGANFLQEMMKAMAEDPSGGSTAEESSYQSQLSQYHAYEQKQWKARFLVVRWIIHTLNFVYHYIASGYKLSASPYAFVRAQAVDSHVRTFFTAFLTVEVAVISAYFLVMSQPKFKDFSRENLVSRILSMASAVVPAVGRYQPLVTRALVYWNGASIFVGDLMLMVFYFGITSVLGN</sequence>
<keyword id="KW-0256">Endoplasmic reticulum</keyword>
<keyword id="KW-0931">ER-Golgi transport</keyword>
<keyword id="KW-0333">Golgi apparatus</keyword>
<keyword id="KW-0472">Membrane</keyword>
<keyword id="KW-1185">Reference proteome</keyword>
<keyword id="KW-0812">Transmembrane</keyword>
<keyword id="KW-1133">Transmembrane helix</keyword>
<keyword id="KW-0813">Transport</keyword>
<organism>
    <name type="scientific">Clavispora lusitaniae (strain ATCC 42720)</name>
    <name type="common">Yeast</name>
    <name type="synonym">Candida lusitaniae</name>
    <dbReference type="NCBI Taxonomy" id="306902"/>
    <lineage>
        <taxon>Eukaryota</taxon>
        <taxon>Fungi</taxon>
        <taxon>Dikarya</taxon>
        <taxon>Ascomycota</taxon>
        <taxon>Saccharomycotina</taxon>
        <taxon>Pichiomycetes</taxon>
        <taxon>Metschnikowiaceae</taxon>
        <taxon>Clavispora</taxon>
    </lineage>
</organism>
<name>GET2_CLAL4</name>
<dbReference type="EMBL" id="CH408083">
    <property type="protein sequence ID" value="EEQ41634.1"/>
    <property type="molecule type" value="Genomic_DNA"/>
</dbReference>
<dbReference type="RefSeq" id="XP_002614276.1">
    <property type="nucleotide sequence ID" value="XM_002614230.1"/>
</dbReference>
<dbReference type="SMR" id="C4YCC3"/>
<dbReference type="FunCoup" id="C4YCC3">
    <property type="interactions" value="58"/>
</dbReference>
<dbReference type="STRING" id="306902.C4YCC3"/>
<dbReference type="GeneID" id="8494732"/>
<dbReference type="KEGG" id="clu:CLUG_05762"/>
<dbReference type="VEuPathDB" id="FungiDB:CLUG_05762"/>
<dbReference type="HOGENOM" id="CLU_066477_0_0_1"/>
<dbReference type="InParanoid" id="C4YCC3"/>
<dbReference type="OMA" id="QYWDVLS"/>
<dbReference type="OrthoDB" id="127545at4891"/>
<dbReference type="Proteomes" id="UP000007703">
    <property type="component" value="Unassembled WGS sequence"/>
</dbReference>
<dbReference type="GO" id="GO:0005789">
    <property type="term" value="C:endoplasmic reticulum membrane"/>
    <property type="evidence" value="ECO:0007669"/>
    <property type="project" value="UniProtKB-SubCell"/>
</dbReference>
<dbReference type="GO" id="GO:0043529">
    <property type="term" value="C:GET complex"/>
    <property type="evidence" value="ECO:0007669"/>
    <property type="project" value="UniProtKB-UniRule"/>
</dbReference>
<dbReference type="GO" id="GO:0000139">
    <property type="term" value="C:Golgi membrane"/>
    <property type="evidence" value="ECO:0007669"/>
    <property type="project" value="UniProtKB-SubCell"/>
</dbReference>
<dbReference type="GO" id="GO:0045048">
    <property type="term" value="P:protein insertion into ER membrane"/>
    <property type="evidence" value="ECO:0007669"/>
    <property type="project" value="UniProtKB-UniRule"/>
</dbReference>
<dbReference type="GO" id="GO:0006890">
    <property type="term" value="P:retrograde vesicle-mediated transport, Golgi to endoplasmic reticulum"/>
    <property type="evidence" value="ECO:0007669"/>
    <property type="project" value="TreeGrafter"/>
</dbReference>
<dbReference type="HAMAP" id="MF_03114">
    <property type="entry name" value="Get2"/>
    <property type="match status" value="1"/>
</dbReference>
<dbReference type="InterPro" id="IPR014802">
    <property type="entry name" value="GET2"/>
</dbReference>
<dbReference type="InterPro" id="IPR028143">
    <property type="entry name" value="Get2/sif1"/>
</dbReference>
<dbReference type="PANTHER" id="PTHR28263">
    <property type="entry name" value="GOLGI TO ER TRAFFIC PROTEIN 2"/>
    <property type="match status" value="1"/>
</dbReference>
<dbReference type="PANTHER" id="PTHR28263:SF1">
    <property type="entry name" value="GOLGI TO ER TRAFFIC PROTEIN 2"/>
    <property type="match status" value="1"/>
</dbReference>
<dbReference type="Pfam" id="PF08690">
    <property type="entry name" value="GET2"/>
    <property type="match status" value="1"/>
</dbReference>
<protein>
    <recommendedName>
        <fullName evidence="1">Golgi to ER traffic protein 2</fullName>
    </recommendedName>
</protein>
<feature type="chain" id="PRO_0000388630" description="Golgi to ER traffic protein 2">
    <location>
        <begin position="1"/>
        <end position="292"/>
    </location>
</feature>
<feature type="topological domain" description="Cytoplasmic" evidence="1">
    <location>
        <begin position="1"/>
        <end position="158"/>
    </location>
</feature>
<feature type="transmembrane region" description="Helical" evidence="1">
    <location>
        <begin position="159"/>
        <end position="179"/>
    </location>
</feature>
<feature type="topological domain" description="Lumenal" evidence="1">
    <location>
        <begin position="180"/>
        <end position="205"/>
    </location>
</feature>
<feature type="transmembrane region" description="Helical" evidence="1">
    <location>
        <begin position="206"/>
        <end position="225"/>
    </location>
</feature>
<feature type="topological domain" description="Cytoplasmic" evidence="1">
    <location>
        <begin position="226"/>
        <end position="268"/>
    </location>
</feature>
<feature type="transmembrane region" description="Helical" evidence="1">
    <location>
        <begin position="269"/>
        <end position="289"/>
    </location>
</feature>
<feature type="topological domain" description="Lumenal" evidence="1">
    <location>
        <begin position="290"/>
        <end position="292"/>
    </location>
</feature>
<feature type="region of interest" description="Disordered" evidence="2">
    <location>
        <begin position="1"/>
        <end position="80"/>
    </location>
</feature>
<feature type="compositionally biased region" description="Basic and acidic residues" evidence="2">
    <location>
        <begin position="1"/>
        <end position="18"/>
    </location>
</feature>
<feature type="compositionally biased region" description="Polar residues" evidence="2">
    <location>
        <begin position="29"/>
        <end position="47"/>
    </location>
</feature>
<feature type="compositionally biased region" description="Polar residues" evidence="2">
    <location>
        <begin position="55"/>
        <end position="71"/>
    </location>
</feature>
<reference key="1">
    <citation type="journal article" date="2009" name="Nature">
        <title>Evolution of pathogenicity and sexual reproduction in eight Candida genomes.</title>
        <authorList>
            <person name="Butler G."/>
            <person name="Rasmussen M.D."/>
            <person name="Lin M.F."/>
            <person name="Santos M.A.S."/>
            <person name="Sakthikumar S."/>
            <person name="Munro C.A."/>
            <person name="Rheinbay E."/>
            <person name="Grabherr M."/>
            <person name="Forche A."/>
            <person name="Reedy J.L."/>
            <person name="Agrafioti I."/>
            <person name="Arnaud M.B."/>
            <person name="Bates S."/>
            <person name="Brown A.J.P."/>
            <person name="Brunke S."/>
            <person name="Costanzo M.C."/>
            <person name="Fitzpatrick D.A."/>
            <person name="de Groot P.W.J."/>
            <person name="Harris D."/>
            <person name="Hoyer L.L."/>
            <person name="Hube B."/>
            <person name="Klis F.M."/>
            <person name="Kodira C."/>
            <person name="Lennard N."/>
            <person name="Logue M.E."/>
            <person name="Martin R."/>
            <person name="Neiman A.M."/>
            <person name="Nikolaou E."/>
            <person name="Quail M.A."/>
            <person name="Quinn J."/>
            <person name="Santos M.C."/>
            <person name="Schmitzberger F.F."/>
            <person name="Sherlock G."/>
            <person name="Shah P."/>
            <person name="Silverstein K.A.T."/>
            <person name="Skrzypek M.S."/>
            <person name="Soll D."/>
            <person name="Staggs R."/>
            <person name="Stansfield I."/>
            <person name="Stumpf M.P.H."/>
            <person name="Sudbery P.E."/>
            <person name="Srikantha T."/>
            <person name="Zeng Q."/>
            <person name="Berman J."/>
            <person name="Berriman M."/>
            <person name="Heitman J."/>
            <person name="Gow N.A.R."/>
            <person name="Lorenz M.C."/>
            <person name="Birren B.W."/>
            <person name="Kellis M."/>
            <person name="Cuomo C.A."/>
        </authorList>
    </citation>
    <scope>NUCLEOTIDE SEQUENCE [LARGE SCALE GENOMIC DNA]</scope>
    <source>
        <strain>ATCC 42720</strain>
    </source>
</reference>
<comment type="function">
    <text evidence="1">Required for the post-translational delivery of tail-anchored (TA) proteins to the endoplasmic reticulum. Together with GET1, acts as a membrane receptor for soluble GET3, which recognizes and selectively binds the transmembrane domain of TA proteins in the cytosol. The GET complex cooperates with the HDEL receptor ERD2 to mediate the ATP-dependent retrieval of resident ER proteins that contain a C-terminal H-D-E-L retention signal from the Golgi to the ER.</text>
</comment>
<comment type="subunit">
    <text evidence="1">Component of the Golgi to ER traffic (GET) complex, which is composed of GET1, GET2 and GET3. Within the complex, GET1 and GET2 form a heterotetramer which is stabilized by phosphatidylinositol binding and which binds to the GET3 homodimer.</text>
</comment>
<comment type="subcellular location">
    <subcellularLocation>
        <location evidence="1">Endoplasmic reticulum membrane</location>
        <topology evidence="1">Multi-pass membrane protein</topology>
    </subcellularLocation>
    <subcellularLocation>
        <location evidence="1">Golgi apparatus membrane</location>
        <topology evidence="1">Multi-pass membrane protein</topology>
    </subcellularLocation>
</comment>
<comment type="similarity">
    <text evidence="1">Belongs to the GET2 family.</text>
</comment>
<evidence type="ECO:0000255" key="1">
    <source>
        <dbReference type="HAMAP-Rule" id="MF_03114"/>
    </source>
</evidence>
<evidence type="ECO:0000256" key="2">
    <source>
        <dbReference type="SAM" id="MobiDB-lite"/>
    </source>
</evidence>
<gene>
    <name evidence="1" type="primary">GET2</name>
    <name type="ORF">CLUG_05762</name>
</gene>